<dbReference type="EC" id="3.5.1.n3" evidence="1"/>
<dbReference type="EMBL" id="CP000076">
    <property type="protein sequence ID" value="AAY92316.1"/>
    <property type="molecule type" value="Genomic_DNA"/>
</dbReference>
<dbReference type="RefSeq" id="WP_011061334.1">
    <property type="nucleotide sequence ID" value="NC_004129.6"/>
</dbReference>
<dbReference type="SMR" id="Q4KC81"/>
<dbReference type="STRING" id="220664.PFL_3046"/>
<dbReference type="KEGG" id="pfl:PFL_3046"/>
<dbReference type="PATRIC" id="fig|220664.5.peg.3106"/>
<dbReference type="eggNOG" id="COG0726">
    <property type="taxonomic scope" value="Bacteria"/>
</dbReference>
<dbReference type="HOGENOM" id="CLU_084199_0_0_6"/>
<dbReference type="UniPathway" id="UPA00030"/>
<dbReference type="UniPathway" id="UPA00036">
    <property type="reaction ID" value="UER00496"/>
</dbReference>
<dbReference type="Proteomes" id="UP000008540">
    <property type="component" value="Chromosome"/>
</dbReference>
<dbReference type="GO" id="GO:0016020">
    <property type="term" value="C:membrane"/>
    <property type="evidence" value="ECO:0007669"/>
    <property type="project" value="GOC"/>
</dbReference>
<dbReference type="GO" id="GO:0016811">
    <property type="term" value="F:hydrolase activity, acting on carbon-nitrogen (but not peptide) bonds, in linear amides"/>
    <property type="evidence" value="ECO:0007669"/>
    <property type="project" value="UniProtKB-UniRule"/>
</dbReference>
<dbReference type="GO" id="GO:0036108">
    <property type="term" value="P:4-amino-4-deoxy-alpha-L-arabinopyranosyl undecaprenyl phosphate biosynthetic process"/>
    <property type="evidence" value="ECO:0007669"/>
    <property type="project" value="UniProtKB-UniRule"/>
</dbReference>
<dbReference type="GO" id="GO:0009245">
    <property type="term" value="P:lipid A biosynthetic process"/>
    <property type="evidence" value="ECO:0007669"/>
    <property type="project" value="UniProtKB-UniRule"/>
</dbReference>
<dbReference type="GO" id="GO:0009103">
    <property type="term" value="P:lipopolysaccharide biosynthetic process"/>
    <property type="evidence" value="ECO:0007669"/>
    <property type="project" value="UniProtKB-UniRule"/>
</dbReference>
<dbReference type="GO" id="GO:0046677">
    <property type="term" value="P:response to antibiotic"/>
    <property type="evidence" value="ECO:0007669"/>
    <property type="project" value="UniProtKB-KW"/>
</dbReference>
<dbReference type="CDD" id="cd10939">
    <property type="entry name" value="CE4_ArnD"/>
    <property type="match status" value="1"/>
</dbReference>
<dbReference type="Gene3D" id="3.20.20.370">
    <property type="entry name" value="Glycoside hydrolase/deacetylase"/>
    <property type="match status" value="1"/>
</dbReference>
<dbReference type="HAMAP" id="MF_01870">
    <property type="entry name" value="ArnD"/>
    <property type="match status" value="1"/>
</dbReference>
<dbReference type="InterPro" id="IPR023557">
    <property type="entry name" value="ArnD"/>
</dbReference>
<dbReference type="InterPro" id="IPR011330">
    <property type="entry name" value="Glyco_hydro/deAcase_b/a-brl"/>
</dbReference>
<dbReference type="InterPro" id="IPR002509">
    <property type="entry name" value="NODB_dom"/>
</dbReference>
<dbReference type="InterPro" id="IPR050248">
    <property type="entry name" value="Polysacc_deacetylase_ArnD"/>
</dbReference>
<dbReference type="NCBIfam" id="NF011923">
    <property type="entry name" value="PRK15394.1"/>
    <property type="match status" value="1"/>
</dbReference>
<dbReference type="PANTHER" id="PTHR10587:SF137">
    <property type="entry name" value="4-DEOXY-4-FORMAMIDO-L-ARABINOSE-PHOSPHOUNDECAPRENOL DEFORMYLASE ARND-RELATED"/>
    <property type="match status" value="1"/>
</dbReference>
<dbReference type="PANTHER" id="PTHR10587">
    <property type="entry name" value="GLYCOSYL TRANSFERASE-RELATED"/>
    <property type="match status" value="1"/>
</dbReference>
<dbReference type="Pfam" id="PF01522">
    <property type="entry name" value="Polysacc_deac_1"/>
    <property type="match status" value="1"/>
</dbReference>
<dbReference type="SUPFAM" id="SSF88713">
    <property type="entry name" value="Glycoside hydrolase/deacetylase"/>
    <property type="match status" value="1"/>
</dbReference>
<dbReference type="PROSITE" id="PS51677">
    <property type="entry name" value="NODB"/>
    <property type="match status" value="1"/>
</dbReference>
<proteinExistence type="inferred from homology"/>
<accession>Q4KC81</accession>
<feature type="chain" id="PRO_0000383523" description="Probable 4-deoxy-4-formamido-L-arabinose-phosphoundecaprenol deformylase ArnD">
    <location>
        <begin position="1"/>
        <end position="294"/>
    </location>
</feature>
<feature type="domain" description="NodB homology" evidence="1">
    <location>
        <begin position="1"/>
        <end position="259"/>
    </location>
</feature>
<sequence length="294" mass="32462">MQAGLRIDVDTYRGTREGVPRLLESLDEAGVKATFFFSVGPDNMGRHLWRLIRPQFLWKMLRSNAAGLYGWDILLAGTAWPGKPIGRDLGHLMRQTLAAGHEVGLHAWDHHGWQANTGRWSQAQLIEQIRRGVDSLNDILGQAVSCSASAGWRADERVIEAKQQFGFRYNSDCRGQSLFLPRLADGSLGAPQIPVDLPTFDEVVGPVVAAKDFNSYILDRFSPDKLNVYTVHAEVEGILMANDFRQLLASARQRDIHFQPLGNMLPADLASLPAGKVVRGALEGREGWLGVQGA</sequence>
<evidence type="ECO:0000255" key="1">
    <source>
        <dbReference type="HAMAP-Rule" id="MF_01870"/>
    </source>
</evidence>
<keyword id="KW-0046">Antibiotic resistance</keyword>
<keyword id="KW-0378">Hydrolase</keyword>
<keyword id="KW-0441">Lipid A biosynthesis</keyword>
<keyword id="KW-0444">Lipid biosynthesis</keyword>
<keyword id="KW-0443">Lipid metabolism</keyword>
<keyword id="KW-0448">Lipopolysaccharide biosynthesis</keyword>
<protein>
    <recommendedName>
        <fullName evidence="1">Probable 4-deoxy-4-formamido-L-arabinose-phosphoundecaprenol deformylase ArnD</fullName>
        <ecNumber evidence="1">3.5.1.n3</ecNumber>
    </recommendedName>
</protein>
<reference key="1">
    <citation type="journal article" date="2005" name="Nat. Biotechnol.">
        <title>Complete genome sequence of the plant commensal Pseudomonas fluorescens Pf-5.</title>
        <authorList>
            <person name="Paulsen I.T."/>
            <person name="Press C.M."/>
            <person name="Ravel J."/>
            <person name="Kobayashi D.Y."/>
            <person name="Myers G.S.A."/>
            <person name="Mavrodi D.V."/>
            <person name="DeBoy R.T."/>
            <person name="Seshadri R."/>
            <person name="Ren Q."/>
            <person name="Madupu R."/>
            <person name="Dodson R.J."/>
            <person name="Durkin A.S."/>
            <person name="Brinkac L.M."/>
            <person name="Daugherty S.C."/>
            <person name="Sullivan S.A."/>
            <person name="Rosovitz M.J."/>
            <person name="Gwinn M.L."/>
            <person name="Zhou L."/>
            <person name="Schneider D.J."/>
            <person name="Cartinhour S.W."/>
            <person name="Nelson W.C."/>
            <person name="Weidman J."/>
            <person name="Watkins K."/>
            <person name="Tran K."/>
            <person name="Khouri H."/>
            <person name="Pierson E.A."/>
            <person name="Pierson L.S. III"/>
            <person name="Thomashow L.S."/>
            <person name="Loper J.E."/>
        </authorList>
    </citation>
    <scope>NUCLEOTIDE SEQUENCE [LARGE SCALE GENOMIC DNA]</scope>
    <source>
        <strain>ATCC BAA-477 / NRRL B-23932 / Pf-5</strain>
    </source>
</reference>
<organism>
    <name type="scientific">Pseudomonas fluorescens (strain ATCC BAA-477 / NRRL B-23932 / Pf-5)</name>
    <dbReference type="NCBI Taxonomy" id="220664"/>
    <lineage>
        <taxon>Bacteria</taxon>
        <taxon>Pseudomonadati</taxon>
        <taxon>Pseudomonadota</taxon>
        <taxon>Gammaproteobacteria</taxon>
        <taxon>Pseudomonadales</taxon>
        <taxon>Pseudomonadaceae</taxon>
        <taxon>Pseudomonas</taxon>
    </lineage>
</organism>
<comment type="function">
    <text evidence="1">Catalyzes the deformylation of 4-deoxy-4-formamido-L-arabinose-phosphoundecaprenol to 4-amino-4-deoxy-L-arabinose-phosphoundecaprenol. The modified arabinose is attached to lipid A and is required for resistance to polymyxin and cationic antimicrobial peptides.</text>
</comment>
<comment type="catalytic activity">
    <reaction evidence="1">
        <text>4-deoxy-4-formamido-alpha-L-arabinopyranosyl di-trans,octa-cis-undecaprenyl phosphate + H2O = 4-amino-4-deoxy-alpha-L-arabinopyranosyl di-trans,octa-cis-undecaprenyl phosphate + formate</text>
        <dbReference type="Rhea" id="RHEA:27734"/>
        <dbReference type="ChEBI" id="CHEBI:15377"/>
        <dbReference type="ChEBI" id="CHEBI:15740"/>
        <dbReference type="ChEBI" id="CHEBI:58909"/>
        <dbReference type="ChEBI" id="CHEBI:60463"/>
        <dbReference type="EC" id="3.5.1.n3"/>
    </reaction>
</comment>
<comment type="pathway">
    <text evidence="1">Glycolipid biosynthesis; 4-amino-4-deoxy-alpha-L-arabinose undecaprenyl phosphate biosynthesis; 4-amino-4-deoxy-alpha-L-arabinose undecaprenyl phosphate from UDP-4-deoxy-4-formamido-beta-L-arabinose and undecaprenyl phosphate: step 2/2.</text>
</comment>
<comment type="pathway">
    <text evidence="1">Bacterial outer membrane biogenesis; lipopolysaccharide biosynthesis.</text>
</comment>
<comment type="similarity">
    <text evidence="1">Belongs to the polysaccharide deacetylase family. ArnD deformylase subfamily.</text>
</comment>
<name>ARND_PSEF5</name>
<gene>
    <name evidence="1" type="primary">arnD</name>
    <name type="ordered locus">PFL_3046</name>
</gene>